<organismHost>
    <name type="scientific">Homo sapiens</name>
    <name type="common">Human</name>
    <dbReference type="NCBI Taxonomy" id="9606"/>
</organismHost>
<name>GAG_HV193</name>
<accession>O89291</accession>
<comment type="function">
    <molecule>Gag polyprotein</molecule>
    <text evidence="5">Mediates, with Gag-Pol polyprotein, the essential events in virion assembly, including binding the plasma membrane, making the protein-protein interactions necessary to create spherical particles, recruiting the viral Env proteins, and packaging the genomic RNA via direct interactions with the RNA packaging sequence (Psi).</text>
</comment>
<comment type="function">
    <molecule>Matrix protein p17</molecule>
    <text evidence="1 6">Targets the polyprotein to the plasma membrane via a multipartite membrane-binding signal, that includes its myristoylated N-terminus (By similarity). Matrix protein is part of the pre-integration complex. Implicated in the release from host cell mediated by Vpu. Binds to RNA (By similarity).</text>
</comment>
<comment type="function">
    <molecule>Capsid protein p24</molecule>
    <text evidence="5 6">Forms the conical core that encapsulates the genomic RNA-nucleocapsid complex in the virion. Most core are conical, with only 7% tubular. The core is constituted by capsid protein hexamer subunits. The core is disassembled soon after virion entry (By similarity). The capsid promotes immune invasion by cloaking viral DNA from CGAS detection (By similarity). Host restriction factors such as TRIM5-alpha or TRIMCyp bind retroviral capsids and cause premature capsid disassembly, leading to blocks in reverse transcription. Capsid restriction by TRIM5 is one of the factors which restricts HIV-1 to the human species. Host PIN1 apparently facilitates the virion uncoating (By similarity). On the other hand, interactions with PDZD8 or CYPA stabilize the capsid (By similarity).</text>
</comment>
<comment type="function">
    <molecule>Nucleocapsid protein p7</molecule>
    <text evidence="5">Encapsulates and protects viral dimeric unspliced genomic RNA (gRNA). Binds these RNAs through its zinc fingers. Acts as a nucleic acid chaperone which is involved in rearangement of nucleic acid secondary structure during gRNA retrotranscription. Also facilitates template switch leading to recombination. As part of the polyprotein, participates in gRNA dimerization, packaging, tRNA incorporation and virion assembly.</text>
</comment>
<comment type="function">
    <molecule>p6-gag</molecule>
    <text evidence="6">Plays a role in budding of the assembled particle by interacting with the host class E VPS proteins TSG101 and PDCD6IP/AIP1.</text>
</comment>
<comment type="subunit">
    <molecule>Gag polyprotein</molecule>
    <text evidence="4 5">Homotrimer; further assembles as hexamers of trimers. Oligomerization possibly creates a central hole into which the cytoplasmic tail of the gp41 envelope protein may be inserted. Interacts with host TRIM22; this interaction seems to disrupt proper trafficking of Gag polyprotein and may interfere with budding. Interacts with host PDZD8. When ubiquitinated, interacts (via p6-gag domain) with host PACSIN2; this interaction allows PACSIN2 recruitment to viral assembly sites and its subsequent incorporation into virions. Interacts with MOV10 (By similarity).</text>
</comment>
<comment type="subunit">
    <molecule>Matrix protein p17</molecule>
    <text evidence="5 6">Homotrimer; further assembles as hexamers of trimers. Interacts with gp41 (via C-terminus). Interacts with host CALM1; this interaction induces a conformational change in the Matrix protein, triggering exposure of the myristate group. Interacts with host AP3D1; this interaction allows the polyprotein trafficking to multivesicular bodies during virus assembly. Part of the pre-integration complex (PIC) which is composed of viral genome, matrix protein, Vpr and integrase.</text>
</comment>
<comment type="subunit">
    <molecule>Capsid protein p24</molecule>
    <text evidence="5 6">Homodimer; the homodimer further multimerizes as homohexamers or homopentamers (By similarity). Interacts with host NUP98 (By similarity). Interacts with host PPIA/CYPA; this interaction stabilizes the capsid (By similarity). Interacts with host NUP153 (By similarity). Interacts with host PDZD8; this interaction stabilizes the capsid. Interacts with host TRIM5; this interaction destabilizes the capsid (By similarity). Interacts with host CPSF6 (By similarity). Interacts with host NONO; the interaction is weak (By similarity).</text>
</comment>
<comment type="subunit">
    <molecule>Nucleocapsid protein p7</molecule>
    <text evidence="6">Interacts with host NUP98.</text>
</comment>
<comment type="subunit">
    <molecule>p6-gag</molecule>
    <text evidence="3 6">Interacts with Vpr; this interaction allows Vpr incorporation into the virion. Interacts with host TSG101. p6-gag interacts with host PDCD6IP/AIP1.</text>
</comment>
<comment type="subcellular location">
    <molecule>Gag polyprotein</molecule>
    <subcellularLocation>
        <location evidence="6">Host cell membrane</location>
        <topology evidence="6">Lipid-anchor</topology>
    </subcellularLocation>
    <subcellularLocation>
        <location evidence="6">Host endosome</location>
        <location evidence="6">Host multivesicular body</location>
    </subcellularLocation>
    <text evidence="6">These locations are probably linked to virus assembly sites. The main location is the cell membrane, but under some circumstances, late endosomal compartments can serve as productive sites for virion assembly.</text>
</comment>
<comment type="subcellular location">
    <molecule>Matrix protein p17</molecule>
    <subcellularLocation>
        <location evidence="6">Virion membrane</location>
        <topology evidence="6">Lipid-anchor</topology>
    </subcellularLocation>
    <subcellularLocation>
        <location evidence="1">Host nucleus</location>
    </subcellularLocation>
    <subcellularLocation>
        <location evidence="1">Host cytoplasm</location>
    </subcellularLocation>
</comment>
<comment type="subcellular location">
    <molecule>Capsid protein p24</molecule>
    <subcellularLocation>
        <location evidence="6">Virion</location>
    </subcellularLocation>
</comment>
<comment type="subcellular location">
    <molecule>Nucleocapsid protein p7</molecule>
    <subcellularLocation>
        <location evidence="6">Virion</location>
    </subcellularLocation>
</comment>
<comment type="alternative products">
    <event type="ribosomal frameshifting"/>
    <isoform>
        <id>O89291-1</id>
        <name>Gag polyprotein</name>
        <sequence type="displayed"/>
    </isoform>
    <isoform>
        <id>O89290-1</id>
        <name>Gag-Pol polyprotein</name>
        <sequence type="external"/>
    </isoform>
    <text>Translation results in the formation of the Gag polyprotein most of the time. Ribosomal frameshifting at the gag-pol genes boundary occurs at low frequency and produces the Gag-Pol polyprotein. This strategy of translation probably allows the virus to modulate the quantity of each viral protein. Maintenance of a correct Gag to Gag-Pol ratio is essential for RNA dimerization and viral infectivity.</text>
</comment>
<comment type="domain">
    <text evidence="6">Late-budding domains (L domains) are short sequence motifs essential for viral particle budding. They recruit proteins of the host ESCRT machinery (Endosomal Sorting Complex Required for Transport) or ESCRT-associated proteins. p6-gag contains two L domains: a PTAP/PSAP motif, which interacts with the UEV domain of TSG101 and a LYPX(n)L motif which interacts with PDCD6IP/AIP1.</text>
</comment>
<comment type="PTM">
    <text evidence="6">Gag-Pol polyprotein: Specific enzymatic cleavages by the viral protease yield mature proteins.</text>
</comment>
<comment type="PTM">
    <molecule>Matrix protein p17</molecule>
    <text evidence="5">Tyrosine phosphorylated presumably in the virion by a host kinase. Phosphorylation is apparently not a major regulator of membrane association.</text>
</comment>
<comment type="PTM">
    <text evidence="6">Capsid protein p24 is phosphorylated possibly by host MAPK1; this phosphorylation is necessary for Pin1-mediated virion uncoating.</text>
</comment>
<comment type="PTM">
    <text evidence="2">Nucleocapsid protein p7 is methylated by host PRMT6, impairing its function by reducing RNA annealing and the initiation of reverse transcription.</text>
</comment>
<comment type="miscellaneous">
    <text>HIV-1 lineages are divided in three main groups, M (for Major), O (for Outlier), and N (for New, or Non-M, Non-O). The vast majority of strains found worldwide belong to the group M. Group O seems to be endemic to and largely confined to Cameroon and neighboring countries in West Central Africa, where these viruses represent a small minority of HIV-1 strains. The group N is represented by a limited number of isolates from Cameroonian persons. The group M is further subdivided in 9 clades or subtypes (A to D, F to H, J and K).</text>
</comment>
<comment type="miscellaneous">
    <molecule>Isoform Gag polyprotein</molecule>
    <text>Produced by conventional translation.</text>
</comment>
<comment type="similarity">
    <text evidence="10">Belongs to the primate lentivirus group gag polyprotein family.</text>
</comment>
<dbReference type="EMBL" id="AF005494">
    <property type="protein sequence ID" value="AAD03165.1"/>
    <property type="molecule type" value="Genomic_DNA"/>
</dbReference>
<dbReference type="SMR" id="O89291"/>
<dbReference type="PRO" id="PR:O89291"/>
<dbReference type="Proteomes" id="UP000007687">
    <property type="component" value="Segment"/>
</dbReference>
<dbReference type="GO" id="GO:0042025">
    <property type="term" value="C:host cell nucleus"/>
    <property type="evidence" value="ECO:0007669"/>
    <property type="project" value="UniProtKB-SubCell"/>
</dbReference>
<dbReference type="GO" id="GO:0020002">
    <property type="term" value="C:host cell plasma membrane"/>
    <property type="evidence" value="ECO:0007669"/>
    <property type="project" value="UniProtKB-SubCell"/>
</dbReference>
<dbReference type="GO" id="GO:0072494">
    <property type="term" value="C:host multivesicular body"/>
    <property type="evidence" value="ECO:0007669"/>
    <property type="project" value="UniProtKB-SubCell"/>
</dbReference>
<dbReference type="GO" id="GO:0016020">
    <property type="term" value="C:membrane"/>
    <property type="evidence" value="ECO:0007669"/>
    <property type="project" value="UniProtKB-KW"/>
</dbReference>
<dbReference type="GO" id="GO:0019013">
    <property type="term" value="C:viral nucleocapsid"/>
    <property type="evidence" value="ECO:0007669"/>
    <property type="project" value="UniProtKB-KW"/>
</dbReference>
<dbReference type="GO" id="GO:0055036">
    <property type="term" value="C:virion membrane"/>
    <property type="evidence" value="ECO:0007669"/>
    <property type="project" value="UniProtKB-SubCell"/>
</dbReference>
<dbReference type="GO" id="GO:0003723">
    <property type="term" value="F:RNA binding"/>
    <property type="evidence" value="ECO:0007669"/>
    <property type="project" value="UniProtKB-KW"/>
</dbReference>
<dbReference type="GO" id="GO:0005198">
    <property type="term" value="F:structural molecule activity"/>
    <property type="evidence" value="ECO:0007669"/>
    <property type="project" value="InterPro"/>
</dbReference>
<dbReference type="GO" id="GO:0008270">
    <property type="term" value="F:zinc ion binding"/>
    <property type="evidence" value="ECO:0007669"/>
    <property type="project" value="UniProtKB-KW"/>
</dbReference>
<dbReference type="GO" id="GO:0039702">
    <property type="term" value="P:viral budding via host ESCRT complex"/>
    <property type="evidence" value="ECO:0007669"/>
    <property type="project" value="UniProtKB-KW"/>
</dbReference>
<dbReference type="GO" id="GO:0075523">
    <property type="term" value="P:viral translational frameshifting"/>
    <property type="evidence" value="ECO:0007669"/>
    <property type="project" value="UniProtKB-KW"/>
</dbReference>
<dbReference type="FunFam" id="1.10.1200.30:FF:000001">
    <property type="entry name" value="Gag polyprotein"/>
    <property type="match status" value="1"/>
</dbReference>
<dbReference type="FunFam" id="1.10.375.10:FF:000001">
    <property type="entry name" value="Gag polyprotein"/>
    <property type="match status" value="1"/>
</dbReference>
<dbReference type="FunFam" id="4.10.60.10:FF:000001">
    <property type="entry name" value="Gag polyprotein"/>
    <property type="match status" value="1"/>
</dbReference>
<dbReference type="Gene3D" id="1.10.1200.30">
    <property type="match status" value="1"/>
</dbReference>
<dbReference type="Gene3D" id="6.10.250.390">
    <property type="match status" value="1"/>
</dbReference>
<dbReference type="Gene3D" id="1.10.375.10">
    <property type="entry name" value="Human Immunodeficiency Virus Type 1 Capsid Protein"/>
    <property type="match status" value="1"/>
</dbReference>
<dbReference type="Gene3D" id="1.10.150.90">
    <property type="entry name" value="Immunodeficiency lentiviruses, gag gene matrix protein p17"/>
    <property type="match status" value="1"/>
</dbReference>
<dbReference type="Gene3D" id="1.20.5.760">
    <property type="entry name" value="Single helix bin"/>
    <property type="match status" value="1"/>
</dbReference>
<dbReference type="Gene3D" id="4.10.60.10">
    <property type="entry name" value="Zinc finger, CCHC-type"/>
    <property type="match status" value="1"/>
</dbReference>
<dbReference type="InterPro" id="IPR045345">
    <property type="entry name" value="Gag_p24_C"/>
</dbReference>
<dbReference type="InterPro" id="IPR014817">
    <property type="entry name" value="Gag_p6"/>
</dbReference>
<dbReference type="InterPro" id="IPR000071">
    <property type="entry name" value="Lentvrl_matrix_N"/>
</dbReference>
<dbReference type="InterPro" id="IPR012344">
    <property type="entry name" value="Matrix_HIV/RSV_N"/>
</dbReference>
<dbReference type="InterPro" id="IPR050195">
    <property type="entry name" value="Primate_lentivir_Gag_pol-like"/>
</dbReference>
<dbReference type="InterPro" id="IPR008916">
    <property type="entry name" value="Retrov_capsid_C"/>
</dbReference>
<dbReference type="InterPro" id="IPR008919">
    <property type="entry name" value="Retrov_capsid_N"/>
</dbReference>
<dbReference type="InterPro" id="IPR010999">
    <property type="entry name" value="Retrovr_matrix"/>
</dbReference>
<dbReference type="InterPro" id="IPR001878">
    <property type="entry name" value="Znf_CCHC"/>
</dbReference>
<dbReference type="InterPro" id="IPR036875">
    <property type="entry name" value="Znf_CCHC_sf"/>
</dbReference>
<dbReference type="PANTHER" id="PTHR40389:SF4">
    <property type="match status" value="1"/>
</dbReference>
<dbReference type="PANTHER" id="PTHR40389">
    <property type="entry name" value="ENDOGENOUS RETROVIRUS GROUP K MEMBER 24 GAG POLYPROTEIN-RELATED"/>
    <property type="match status" value="1"/>
</dbReference>
<dbReference type="Pfam" id="PF00540">
    <property type="entry name" value="Gag_p17"/>
    <property type="match status" value="1"/>
</dbReference>
<dbReference type="Pfam" id="PF19317">
    <property type="entry name" value="Gag_p24_C"/>
    <property type="match status" value="1"/>
</dbReference>
<dbReference type="Pfam" id="PF08705">
    <property type="entry name" value="Gag_p6"/>
    <property type="match status" value="1"/>
</dbReference>
<dbReference type="Pfam" id="PF00098">
    <property type="entry name" value="zf-CCHC"/>
    <property type="match status" value="2"/>
</dbReference>
<dbReference type="PRINTS" id="PR00234">
    <property type="entry name" value="HIV1MATRIX"/>
</dbReference>
<dbReference type="SMART" id="SM00343">
    <property type="entry name" value="ZnF_C2HC"/>
    <property type="match status" value="2"/>
</dbReference>
<dbReference type="SUPFAM" id="SSF47836">
    <property type="entry name" value="Retroviral matrix proteins"/>
    <property type="match status" value="1"/>
</dbReference>
<dbReference type="SUPFAM" id="SSF47353">
    <property type="entry name" value="Retrovirus capsid dimerization domain-like"/>
    <property type="match status" value="1"/>
</dbReference>
<dbReference type="SUPFAM" id="SSF47943">
    <property type="entry name" value="Retrovirus capsid protein, N-terminal core domain"/>
    <property type="match status" value="1"/>
</dbReference>
<dbReference type="SUPFAM" id="SSF57756">
    <property type="entry name" value="Retrovirus zinc finger-like domains"/>
    <property type="match status" value="1"/>
</dbReference>
<dbReference type="PROSITE" id="PS50158">
    <property type="entry name" value="ZF_CCHC"/>
    <property type="match status" value="2"/>
</dbReference>
<feature type="initiator methionine" description="Removed; by host" evidence="1">
    <location>
        <position position="1"/>
    </location>
</feature>
<feature type="chain" id="PRO_0000261204" description="Gag polyprotein">
    <location>
        <begin position="2"/>
        <end position="492"/>
    </location>
</feature>
<feature type="chain" id="PRO_0000246344" description="Matrix protein p17" evidence="1">
    <location>
        <begin position="2"/>
        <end position="128"/>
    </location>
</feature>
<feature type="chain" id="PRO_0000246345" description="Capsid protein p24" evidence="1">
    <location>
        <begin position="129"/>
        <end position="359"/>
    </location>
</feature>
<feature type="peptide" id="PRO_0000246346" description="Spacer peptide 1" evidence="1">
    <location>
        <begin position="360"/>
        <end position="372"/>
    </location>
</feature>
<feature type="chain" id="PRO_0000246347" description="Nucleocapsid protein p7" evidence="1">
    <location>
        <begin position="373"/>
        <end position="427"/>
    </location>
</feature>
<feature type="peptide" id="PRO_0000246348" description="Spacer peptide 2" evidence="1">
    <location>
        <begin position="428"/>
        <end position="443"/>
    </location>
</feature>
<feature type="chain" id="PRO_0000246349" description="p6-gag" evidence="1">
    <location>
        <begin position="444"/>
        <end position="492"/>
    </location>
</feature>
<feature type="zinc finger region" description="CCHC-type 1" evidence="8">
    <location>
        <begin position="385"/>
        <end position="402"/>
    </location>
</feature>
<feature type="zinc finger region" description="CCHC-type 2" evidence="8">
    <location>
        <begin position="406"/>
        <end position="423"/>
    </location>
</feature>
<feature type="region of interest" description="Interaction with Gp41" evidence="6">
    <location>
        <begin position="7"/>
        <end position="31"/>
    </location>
</feature>
<feature type="region of interest" description="Interaction with host CALM1" evidence="5">
    <location>
        <begin position="8"/>
        <end position="43"/>
    </location>
</feature>
<feature type="region of interest" description="Interaction with host AP3D1" evidence="7">
    <location>
        <begin position="12"/>
        <end position="19"/>
    </location>
</feature>
<feature type="region of interest" description="Interaction with membrane phosphatidylinositol 4,5-bisphosphate and RNA" evidence="6">
    <location>
        <begin position="14"/>
        <end position="33"/>
    </location>
</feature>
<feature type="region of interest" description="Interaction with membrane phosphatidylinositol 4,5-bisphosphate" evidence="6">
    <location>
        <begin position="73"/>
        <end position="77"/>
    </location>
</feature>
<feature type="region of interest" description="Interaction with host PPIA/CYPA and NUP153" evidence="6">
    <location>
        <begin position="185"/>
        <end position="223"/>
    </location>
</feature>
<feature type="region of interest" description="PPIA/CYPA-binding loop" evidence="5">
    <location>
        <begin position="213"/>
        <end position="221"/>
    </location>
</feature>
<feature type="region of interest" description="Dimerization/Multimerization of capsid protein p24" evidence="5">
    <location>
        <begin position="273"/>
        <end position="359"/>
    </location>
</feature>
<feature type="region of interest" description="Disordered" evidence="9">
    <location>
        <begin position="432"/>
        <end position="492"/>
    </location>
</feature>
<feature type="short sequence motif" description="Nuclear export signal" evidence="1">
    <location>
        <begin position="16"/>
        <end position="22"/>
    </location>
</feature>
<feature type="short sequence motif" description="Nuclear localization signal" evidence="1">
    <location>
        <begin position="26"/>
        <end position="32"/>
    </location>
</feature>
<feature type="short sequence motif" description="PTAP/PSAP motif">
    <location>
        <begin position="450"/>
        <end position="453"/>
    </location>
</feature>
<feature type="short sequence motif" description="LYPX(n)L motif">
    <location>
        <begin position="477"/>
        <end position="487"/>
    </location>
</feature>
<feature type="site" description="Cleavage; by viral protease" evidence="1">
    <location>
        <begin position="128"/>
        <end position="129"/>
    </location>
</feature>
<feature type="site" description="Cleavage; by viral protease" evidence="1">
    <location>
        <begin position="359"/>
        <end position="360"/>
    </location>
</feature>
<feature type="site" description="Cleavage; by viral protease" evidence="1">
    <location>
        <begin position="372"/>
        <end position="373"/>
    </location>
</feature>
<feature type="site" description="Cleavage; by viral protease" evidence="1">
    <location>
        <begin position="427"/>
        <end position="428"/>
    </location>
</feature>
<feature type="site" description="Cleavage; by viral protease" evidence="1">
    <location>
        <begin position="443"/>
        <end position="444"/>
    </location>
</feature>
<feature type="modified residue" description="Phosphoserine; by host MAPK1" evidence="6">
    <location>
        <position position="144"/>
    </location>
</feature>
<feature type="modified residue" description="Asymmetric dimethylarginine; in Nucleocapsid protein p7; by host PRMT6" evidence="1">
    <location>
        <position position="382"/>
    </location>
</feature>
<feature type="modified residue" description="Asymmetric dimethylarginine; in Nucleocapsid protein p7; by host PRMT6" evidence="1">
    <location>
        <position position="404"/>
    </location>
</feature>
<feature type="lipid moiety-binding region" description="N-myristoyl glycine; by host" evidence="1">
    <location>
        <position position="2"/>
    </location>
</feature>
<keyword id="KW-0014">AIDS</keyword>
<keyword id="KW-0167">Capsid protein</keyword>
<keyword id="KW-1032">Host cell membrane</keyword>
<keyword id="KW-1035">Host cytoplasm</keyword>
<keyword id="KW-1039">Host endosome</keyword>
<keyword id="KW-1043">Host membrane</keyword>
<keyword id="KW-1048">Host nucleus</keyword>
<keyword id="KW-0945">Host-virus interaction</keyword>
<keyword id="KW-0449">Lipoprotein</keyword>
<keyword id="KW-0472">Membrane</keyword>
<keyword id="KW-0479">Metal-binding</keyword>
<keyword id="KW-0488">Methylation</keyword>
<keyword id="KW-0519">Myristate</keyword>
<keyword id="KW-0597">Phosphoprotein</keyword>
<keyword id="KW-1185">Reference proteome</keyword>
<keyword id="KW-0677">Repeat</keyword>
<keyword id="KW-0688">Ribosomal frameshifting</keyword>
<keyword id="KW-0694">RNA-binding</keyword>
<keyword id="KW-1198">Viral budding</keyword>
<keyword id="KW-1187">Viral budding via the host ESCRT complexes</keyword>
<keyword id="KW-0543">Viral nucleoprotein</keyword>
<keyword id="KW-1188">Viral release from host cell</keyword>
<keyword id="KW-0946">Virion</keyword>
<keyword id="KW-0862">Zinc</keyword>
<keyword id="KW-0863">Zinc-finger</keyword>
<protein>
    <recommendedName>
        <fullName>Gag polyprotein</fullName>
    </recommendedName>
    <alternativeName>
        <fullName>Pr55Gag</fullName>
    </alternativeName>
    <component>
        <recommendedName>
            <fullName>Matrix protein p17</fullName>
            <shortName>MA</shortName>
        </recommendedName>
    </component>
    <component>
        <recommendedName>
            <fullName>Capsid protein p24</fullName>
            <shortName>CA</shortName>
        </recommendedName>
    </component>
    <component>
        <recommendedName>
            <fullName evidence="6">Spacer peptide 1</fullName>
            <shortName>SP1</shortName>
        </recommendedName>
        <alternativeName>
            <fullName>p2</fullName>
        </alternativeName>
    </component>
    <component>
        <recommendedName>
            <fullName>Nucleocapsid protein p7</fullName>
            <shortName>NC</shortName>
        </recommendedName>
    </component>
    <component>
        <recommendedName>
            <fullName evidence="6">Spacer peptide 2</fullName>
            <shortName>SP2</shortName>
        </recommendedName>
        <alternativeName>
            <fullName>p1</fullName>
        </alternativeName>
    </component>
    <component>
        <recommendedName>
            <fullName>p6-gag</fullName>
        </recommendedName>
    </component>
</protein>
<evidence type="ECO:0000250" key="1"/>
<evidence type="ECO:0000250" key="2">
    <source>
        <dbReference type="UniProtKB" id="P03347"/>
    </source>
</evidence>
<evidence type="ECO:0000250" key="3">
    <source>
        <dbReference type="UniProtKB" id="P03348"/>
    </source>
</evidence>
<evidence type="ECO:0000250" key="4">
    <source>
        <dbReference type="UniProtKB" id="P03349"/>
    </source>
</evidence>
<evidence type="ECO:0000250" key="5">
    <source>
        <dbReference type="UniProtKB" id="P04591"/>
    </source>
</evidence>
<evidence type="ECO:0000250" key="6">
    <source>
        <dbReference type="UniProtKB" id="P12493"/>
    </source>
</evidence>
<evidence type="ECO:0000250" key="7">
    <source>
        <dbReference type="UniProtKB" id="P12497"/>
    </source>
</evidence>
<evidence type="ECO:0000255" key="8">
    <source>
        <dbReference type="PROSITE-ProRule" id="PRU00047"/>
    </source>
</evidence>
<evidence type="ECO:0000256" key="9">
    <source>
        <dbReference type="SAM" id="MobiDB-lite"/>
    </source>
</evidence>
<evidence type="ECO:0000305" key="10"/>
<proteinExistence type="inferred from homology"/>
<reference key="1">
    <citation type="journal article" date="1998" name="J. Virol.">
        <title>A comprehensive panel of near-full-length clones and reference sequences for non-subtype B isolates of human immunodeficiency virus type 1.</title>
        <authorList>
            <person name="Gao F."/>
            <person name="Robertson D.L."/>
            <person name="Carruthers C.D."/>
            <person name="Morrison S.G."/>
            <person name="Jian B."/>
            <person name="Chen Y."/>
            <person name="Barre-Sinoussi F."/>
            <person name="Girard M."/>
            <person name="Srinivasan A."/>
            <person name="Abimiku A.G."/>
            <person name="Shaw G.M."/>
            <person name="Sharp P.M."/>
            <person name="Hahn B.H."/>
        </authorList>
    </citation>
    <scope>NUCLEOTIDE SEQUENCE [GENOMIC DNA]</scope>
</reference>
<organism>
    <name type="scientific">Human immunodeficiency virus type 1 group M subtype F1 (isolate 93BR020)</name>
    <name type="common">HIV-1</name>
    <dbReference type="NCBI Taxonomy" id="388814"/>
    <lineage>
        <taxon>Viruses</taxon>
        <taxon>Riboviria</taxon>
        <taxon>Pararnavirae</taxon>
        <taxon>Artverviricota</taxon>
        <taxon>Revtraviricetes</taxon>
        <taxon>Ortervirales</taxon>
        <taxon>Retroviridae</taxon>
        <taxon>Orthoretrovirinae</taxon>
        <taxon>Lentivirus</taxon>
        <taxon>Human immunodeficiency virus type 1</taxon>
    </lineage>
</organism>
<gene>
    <name type="primary">gag</name>
</gene>
<sequence length="492" mass="54889">MGARASVLSGGKLDAWEKIRLRPGGKKKYRLKHLVWASRELERFALDPGLLETSEGCRKIIGQLQPSLQTGSEELKSLYNTIAVLYYVHQKVEVKDTKEALEKLEEEQNKGRQKTQQATAEKGVSQNYPIVQNLQGQMVHQSLSPRTLNAWVKVIEEKAFSPEVIPMFSALSEGATPQDLNTMLNTVGGHQAAMQMLKDTINEEAAEWDRLHPTQAGPIPPGQIREPRGSDIAGTTSTLQEQIQWMTGNPPVPVGEMYKRWIILGLNKIVRMYSPVGILDIRQGPKEPFRDYVDRFFKTLRAEQATQEVKGWMTDTLLVQNANPDCKTILKALGPGATLEEMMTACQGVGGPSHKARVLAEAMSQATNTAIMMQKSNFKGQRRIVKCFNCGKEGHIAKNCRAPRKKGCWKCGREGHQMKDCTERQANFLGKIWPSNKGRPGNFIQNRPEPSAPPAESFRFGEETTPSPKQEQKDEGLYPPLASLKSLFGNDP</sequence>